<dbReference type="EC" id="3.6.5.-" evidence="1"/>
<dbReference type="EMBL" id="CP000301">
    <property type="protein sequence ID" value="ABD85732.1"/>
    <property type="molecule type" value="Genomic_DNA"/>
</dbReference>
<dbReference type="SMR" id="Q21D04"/>
<dbReference type="STRING" id="316056.RPC_0157"/>
<dbReference type="KEGG" id="rpc:RPC_0157"/>
<dbReference type="eggNOG" id="COG0536">
    <property type="taxonomic scope" value="Bacteria"/>
</dbReference>
<dbReference type="HOGENOM" id="CLU_011747_2_0_5"/>
<dbReference type="OrthoDB" id="9807318at2"/>
<dbReference type="GO" id="GO:0005737">
    <property type="term" value="C:cytoplasm"/>
    <property type="evidence" value="ECO:0007669"/>
    <property type="project" value="UniProtKB-SubCell"/>
</dbReference>
<dbReference type="GO" id="GO:0005525">
    <property type="term" value="F:GTP binding"/>
    <property type="evidence" value="ECO:0007669"/>
    <property type="project" value="UniProtKB-UniRule"/>
</dbReference>
<dbReference type="GO" id="GO:0003924">
    <property type="term" value="F:GTPase activity"/>
    <property type="evidence" value="ECO:0007669"/>
    <property type="project" value="UniProtKB-UniRule"/>
</dbReference>
<dbReference type="GO" id="GO:0000287">
    <property type="term" value="F:magnesium ion binding"/>
    <property type="evidence" value="ECO:0007669"/>
    <property type="project" value="InterPro"/>
</dbReference>
<dbReference type="GO" id="GO:0042254">
    <property type="term" value="P:ribosome biogenesis"/>
    <property type="evidence" value="ECO:0007669"/>
    <property type="project" value="UniProtKB-UniRule"/>
</dbReference>
<dbReference type="CDD" id="cd01898">
    <property type="entry name" value="Obg"/>
    <property type="match status" value="1"/>
</dbReference>
<dbReference type="FunFam" id="2.70.210.12:FF:000001">
    <property type="entry name" value="GTPase Obg"/>
    <property type="match status" value="1"/>
</dbReference>
<dbReference type="Gene3D" id="2.70.210.12">
    <property type="entry name" value="GTP1/OBG domain"/>
    <property type="match status" value="1"/>
</dbReference>
<dbReference type="Gene3D" id="3.40.50.300">
    <property type="entry name" value="P-loop containing nucleotide triphosphate hydrolases"/>
    <property type="match status" value="1"/>
</dbReference>
<dbReference type="HAMAP" id="MF_01454">
    <property type="entry name" value="GTPase_Obg"/>
    <property type="match status" value="1"/>
</dbReference>
<dbReference type="InterPro" id="IPR031167">
    <property type="entry name" value="G_OBG"/>
</dbReference>
<dbReference type="InterPro" id="IPR006073">
    <property type="entry name" value="GTP-bd"/>
</dbReference>
<dbReference type="InterPro" id="IPR014100">
    <property type="entry name" value="GTP-bd_Obg/CgtA"/>
</dbReference>
<dbReference type="InterPro" id="IPR006074">
    <property type="entry name" value="GTP1-OBG_CS"/>
</dbReference>
<dbReference type="InterPro" id="IPR006169">
    <property type="entry name" value="GTP1_OBG_dom"/>
</dbReference>
<dbReference type="InterPro" id="IPR036726">
    <property type="entry name" value="GTP1_OBG_dom_sf"/>
</dbReference>
<dbReference type="InterPro" id="IPR045086">
    <property type="entry name" value="OBG_GTPase"/>
</dbReference>
<dbReference type="InterPro" id="IPR027417">
    <property type="entry name" value="P-loop_NTPase"/>
</dbReference>
<dbReference type="InterPro" id="IPR005225">
    <property type="entry name" value="Small_GTP-bd"/>
</dbReference>
<dbReference type="NCBIfam" id="TIGR02729">
    <property type="entry name" value="Obg_CgtA"/>
    <property type="match status" value="1"/>
</dbReference>
<dbReference type="NCBIfam" id="NF008955">
    <property type="entry name" value="PRK12297.1"/>
    <property type="match status" value="1"/>
</dbReference>
<dbReference type="NCBIfam" id="NF008956">
    <property type="entry name" value="PRK12299.1"/>
    <property type="match status" value="1"/>
</dbReference>
<dbReference type="NCBIfam" id="TIGR00231">
    <property type="entry name" value="small_GTP"/>
    <property type="match status" value="1"/>
</dbReference>
<dbReference type="PANTHER" id="PTHR11702">
    <property type="entry name" value="DEVELOPMENTALLY REGULATED GTP-BINDING PROTEIN-RELATED"/>
    <property type="match status" value="1"/>
</dbReference>
<dbReference type="PANTHER" id="PTHR11702:SF31">
    <property type="entry name" value="MITOCHONDRIAL RIBOSOME-ASSOCIATED GTPASE 2"/>
    <property type="match status" value="1"/>
</dbReference>
<dbReference type="Pfam" id="PF01018">
    <property type="entry name" value="GTP1_OBG"/>
    <property type="match status" value="1"/>
</dbReference>
<dbReference type="Pfam" id="PF01926">
    <property type="entry name" value="MMR_HSR1"/>
    <property type="match status" value="1"/>
</dbReference>
<dbReference type="PIRSF" id="PIRSF002401">
    <property type="entry name" value="GTP_bd_Obg/CgtA"/>
    <property type="match status" value="1"/>
</dbReference>
<dbReference type="PRINTS" id="PR00326">
    <property type="entry name" value="GTP1OBG"/>
</dbReference>
<dbReference type="SUPFAM" id="SSF82051">
    <property type="entry name" value="Obg GTP-binding protein N-terminal domain"/>
    <property type="match status" value="1"/>
</dbReference>
<dbReference type="SUPFAM" id="SSF52540">
    <property type="entry name" value="P-loop containing nucleoside triphosphate hydrolases"/>
    <property type="match status" value="1"/>
</dbReference>
<dbReference type="PROSITE" id="PS51710">
    <property type="entry name" value="G_OBG"/>
    <property type="match status" value="1"/>
</dbReference>
<dbReference type="PROSITE" id="PS00905">
    <property type="entry name" value="GTP1_OBG"/>
    <property type="match status" value="1"/>
</dbReference>
<dbReference type="PROSITE" id="PS51883">
    <property type="entry name" value="OBG"/>
    <property type="match status" value="1"/>
</dbReference>
<name>OBG_RHOPB</name>
<comment type="function">
    <text evidence="1">An essential GTPase which binds GTP, GDP and possibly (p)ppGpp with moderate affinity, with high nucleotide exchange rates and a fairly low GTP hydrolysis rate. Plays a role in control of the cell cycle, stress response, ribosome biogenesis and in those bacteria that undergo differentiation, in morphogenesis control.</text>
</comment>
<comment type="cofactor">
    <cofactor evidence="1">
        <name>Mg(2+)</name>
        <dbReference type="ChEBI" id="CHEBI:18420"/>
    </cofactor>
</comment>
<comment type="subunit">
    <text evidence="1">Monomer.</text>
</comment>
<comment type="subcellular location">
    <subcellularLocation>
        <location evidence="1">Cytoplasm</location>
    </subcellularLocation>
</comment>
<comment type="similarity">
    <text evidence="1">Belongs to the TRAFAC class OBG-HflX-like GTPase superfamily. OBG GTPase family.</text>
</comment>
<keyword id="KW-0963">Cytoplasm</keyword>
<keyword id="KW-0342">GTP-binding</keyword>
<keyword id="KW-0378">Hydrolase</keyword>
<keyword id="KW-0460">Magnesium</keyword>
<keyword id="KW-0479">Metal-binding</keyword>
<keyword id="KW-0547">Nucleotide-binding</keyword>
<proteinExistence type="inferred from homology"/>
<sequence length="349" mass="37449">MKFLDEAKVYIRSGDGGNGCVAFRREKYIEFGGPSGGNGGRGGDVIIEVADGLNTLIDYRYQQHFKAQKGTNGMGKDRHGANGKDIVLKVPVGTQILDEDRETLIHDFTKLGERFVLAEGGNGGFGNAHFKSSTNRAPRNANPGQEGEERWIWLRLKLIADAGLVGLPNAGKSTLLSVVSAAKPKIADYPFTTLHPQLGVVDVDGREFVLADIPGLIEGAHEGAGLGDRFLGHVERCQVLLHLVDATCEHAGKAYKTVRNELMAYAGELTDKVEIVALNKIDAVEADELKKQKDRLKRAAKKTPLLISGVAGTGVKEALRALVEVIGEAPVSEKAKGAAQAEPWAPQNV</sequence>
<feature type="chain" id="PRO_0000386192" description="GTPase Obg">
    <location>
        <begin position="1"/>
        <end position="349"/>
    </location>
</feature>
<feature type="domain" description="Obg" evidence="2">
    <location>
        <begin position="1"/>
        <end position="159"/>
    </location>
</feature>
<feature type="domain" description="OBG-type G" evidence="1">
    <location>
        <begin position="160"/>
        <end position="327"/>
    </location>
</feature>
<feature type="binding site" evidence="1">
    <location>
        <begin position="166"/>
        <end position="173"/>
    </location>
    <ligand>
        <name>GTP</name>
        <dbReference type="ChEBI" id="CHEBI:37565"/>
    </ligand>
</feature>
<feature type="binding site" evidence="1">
    <location>
        <position position="173"/>
    </location>
    <ligand>
        <name>Mg(2+)</name>
        <dbReference type="ChEBI" id="CHEBI:18420"/>
    </ligand>
</feature>
<feature type="binding site" evidence="1">
    <location>
        <begin position="191"/>
        <end position="195"/>
    </location>
    <ligand>
        <name>GTP</name>
        <dbReference type="ChEBI" id="CHEBI:37565"/>
    </ligand>
</feature>
<feature type="binding site" evidence="1">
    <location>
        <position position="193"/>
    </location>
    <ligand>
        <name>Mg(2+)</name>
        <dbReference type="ChEBI" id="CHEBI:18420"/>
    </ligand>
</feature>
<feature type="binding site" evidence="1">
    <location>
        <begin position="212"/>
        <end position="215"/>
    </location>
    <ligand>
        <name>GTP</name>
        <dbReference type="ChEBI" id="CHEBI:37565"/>
    </ligand>
</feature>
<feature type="binding site" evidence="1">
    <location>
        <begin position="279"/>
        <end position="282"/>
    </location>
    <ligand>
        <name>GTP</name>
        <dbReference type="ChEBI" id="CHEBI:37565"/>
    </ligand>
</feature>
<feature type="binding site" evidence="1">
    <location>
        <begin position="308"/>
        <end position="310"/>
    </location>
    <ligand>
        <name>GTP</name>
        <dbReference type="ChEBI" id="CHEBI:37565"/>
    </ligand>
</feature>
<evidence type="ECO:0000255" key="1">
    <source>
        <dbReference type="HAMAP-Rule" id="MF_01454"/>
    </source>
</evidence>
<evidence type="ECO:0000255" key="2">
    <source>
        <dbReference type="PROSITE-ProRule" id="PRU01231"/>
    </source>
</evidence>
<accession>Q21D04</accession>
<protein>
    <recommendedName>
        <fullName evidence="1">GTPase Obg</fullName>
        <ecNumber evidence="1">3.6.5.-</ecNumber>
    </recommendedName>
    <alternativeName>
        <fullName evidence="1">GTP-binding protein Obg</fullName>
    </alternativeName>
</protein>
<organism>
    <name type="scientific">Rhodopseudomonas palustris (strain BisB18)</name>
    <dbReference type="NCBI Taxonomy" id="316056"/>
    <lineage>
        <taxon>Bacteria</taxon>
        <taxon>Pseudomonadati</taxon>
        <taxon>Pseudomonadota</taxon>
        <taxon>Alphaproteobacteria</taxon>
        <taxon>Hyphomicrobiales</taxon>
        <taxon>Nitrobacteraceae</taxon>
        <taxon>Rhodopseudomonas</taxon>
    </lineage>
</organism>
<reference key="1">
    <citation type="submission" date="2006-03" db="EMBL/GenBank/DDBJ databases">
        <title>Complete sequence of Rhodopseudomonas palustris BisB18.</title>
        <authorList>
            <consortium name="US DOE Joint Genome Institute"/>
            <person name="Copeland A."/>
            <person name="Lucas S."/>
            <person name="Lapidus A."/>
            <person name="Barry K."/>
            <person name="Detter J.C."/>
            <person name="Glavina del Rio T."/>
            <person name="Hammon N."/>
            <person name="Israni S."/>
            <person name="Dalin E."/>
            <person name="Tice H."/>
            <person name="Pitluck S."/>
            <person name="Chain P."/>
            <person name="Malfatti S."/>
            <person name="Shin M."/>
            <person name="Vergez L."/>
            <person name="Schmutz J."/>
            <person name="Larimer F."/>
            <person name="Land M."/>
            <person name="Hauser L."/>
            <person name="Pelletier D.A."/>
            <person name="Kyrpides N."/>
            <person name="Anderson I."/>
            <person name="Oda Y."/>
            <person name="Harwood C.S."/>
            <person name="Richardson P."/>
        </authorList>
    </citation>
    <scope>NUCLEOTIDE SEQUENCE [LARGE SCALE GENOMIC DNA]</scope>
    <source>
        <strain>BisB18</strain>
    </source>
</reference>
<gene>
    <name evidence="1" type="primary">obg</name>
    <name type="ordered locus">RPC_0157</name>
</gene>